<protein>
    <recommendedName>
        <fullName evidence="1">A-type ATP synthase subunit F</fullName>
    </recommendedName>
</protein>
<evidence type="ECO:0000255" key="1">
    <source>
        <dbReference type="HAMAP-Rule" id="MF_00312"/>
    </source>
</evidence>
<keyword id="KW-0066">ATP synthesis</keyword>
<keyword id="KW-1003">Cell membrane</keyword>
<keyword id="KW-0375">Hydrogen ion transport</keyword>
<keyword id="KW-0406">Ion transport</keyword>
<keyword id="KW-0472">Membrane</keyword>
<keyword id="KW-0813">Transport</keyword>
<gene>
    <name evidence="1" type="primary">atpF</name>
    <name type="ordered locus">Mevan_0366</name>
</gene>
<dbReference type="EMBL" id="CP000742">
    <property type="protein sequence ID" value="ABR54275.1"/>
    <property type="molecule type" value="Genomic_DNA"/>
</dbReference>
<dbReference type="RefSeq" id="WP_011972178.1">
    <property type="nucleotide sequence ID" value="NC_009634.1"/>
</dbReference>
<dbReference type="SMR" id="A6UP53"/>
<dbReference type="STRING" id="406327.Mevan_0366"/>
<dbReference type="GeneID" id="5325798"/>
<dbReference type="KEGG" id="mvn:Mevan_0366"/>
<dbReference type="eggNOG" id="arCOG04102">
    <property type="taxonomic scope" value="Archaea"/>
</dbReference>
<dbReference type="HOGENOM" id="CLU_135754_2_2_2"/>
<dbReference type="OrthoDB" id="24971at2157"/>
<dbReference type="Proteomes" id="UP000001107">
    <property type="component" value="Chromosome"/>
</dbReference>
<dbReference type="GO" id="GO:0005886">
    <property type="term" value="C:plasma membrane"/>
    <property type="evidence" value="ECO:0007669"/>
    <property type="project" value="UniProtKB-SubCell"/>
</dbReference>
<dbReference type="GO" id="GO:0005524">
    <property type="term" value="F:ATP binding"/>
    <property type="evidence" value="ECO:0007669"/>
    <property type="project" value="UniProtKB-UniRule"/>
</dbReference>
<dbReference type="GO" id="GO:0046933">
    <property type="term" value="F:proton-transporting ATP synthase activity, rotational mechanism"/>
    <property type="evidence" value="ECO:0007669"/>
    <property type="project" value="UniProtKB-UniRule"/>
</dbReference>
<dbReference type="GO" id="GO:0046961">
    <property type="term" value="F:proton-transporting ATPase activity, rotational mechanism"/>
    <property type="evidence" value="ECO:0007669"/>
    <property type="project" value="InterPro"/>
</dbReference>
<dbReference type="GO" id="GO:0042777">
    <property type="term" value="P:proton motive force-driven plasma membrane ATP synthesis"/>
    <property type="evidence" value="ECO:0007669"/>
    <property type="project" value="UniProtKB-UniRule"/>
</dbReference>
<dbReference type="Gene3D" id="3.40.50.10580">
    <property type="entry name" value="ATPase, V1 complex, subunit F"/>
    <property type="match status" value="1"/>
</dbReference>
<dbReference type="HAMAP" id="MF_00312">
    <property type="entry name" value="ATP_synth_F_arch"/>
    <property type="match status" value="1"/>
</dbReference>
<dbReference type="InterPro" id="IPR008218">
    <property type="entry name" value="ATPase_V1-cplx_f_g_su"/>
</dbReference>
<dbReference type="InterPro" id="IPR022944">
    <property type="entry name" value="ATPase_V1-cplx_fsu_bac/arc"/>
</dbReference>
<dbReference type="InterPro" id="IPR036906">
    <property type="entry name" value="ATPase_V1_fsu_sf"/>
</dbReference>
<dbReference type="NCBIfam" id="NF003047">
    <property type="entry name" value="PRK03957.1"/>
    <property type="match status" value="1"/>
</dbReference>
<dbReference type="Pfam" id="PF01990">
    <property type="entry name" value="ATP-synt_F"/>
    <property type="match status" value="1"/>
</dbReference>
<dbReference type="SUPFAM" id="SSF159468">
    <property type="entry name" value="AtpF-like"/>
    <property type="match status" value="1"/>
</dbReference>
<reference key="1">
    <citation type="submission" date="2007-06" db="EMBL/GenBank/DDBJ databases">
        <title>Complete sequence of Methanococcus vannielii SB.</title>
        <authorList>
            <consortium name="US DOE Joint Genome Institute"/>
            <person name="Copeland A."/>
            <person name="Lucas S."/>
            <person name="Lapidus A."/>
            <person name="Barry K."/>
            <person name="Glavina del Rio T."/>
            <person name="Dalin E."/>
            <person name="Tice H."/>
            <person name="Pitluck S."/>
            <person name="Chain P."/>
            <person name="Malfatti S."/>
            <person name="Shin M."/>
            <person name="Vergez L."/>
            <person name="Schmutz J."/>
            <person name="Larimer F."/>
            <person name="Land M."/>
            <person name="Hauser L."/>
            <person name="Kyrpides N."/>
            <person name="Anderson I."/>
            <person name="Sieprawska-Lupa M."/>
            <person name="Whitman W.B."/>
            <person name="Richardson P."/>
        </authorList>
    </citation>
    <scope>NUCLEOTIDE SEQUENCE [LARGE SCALE GENOMIC DNA]</scope>
    <source>
        <strain>ATCC 35089 / DSM 1224 / JCM 13029 / OCM 148 / SB</strain>
    </source>
</reference>
<name>AATF_METVS</name>
<organism>
    <name type="scientific">Methanococcus vannielii (strain ATCC 35089 / DSM 1224 / JCM 13029 / OCM 148 / SB)</name>
    <dbReference type="NCBI Taxonomy" id="406327"/>
    <lineage>
        <taxon>Archaea</taxon>
        <taxon>Methanobacteriati</taxon>
        <taxon>Methanobacteriota</taxon>
        <taxon>Methanomada group</taxon>
        <taxon>Methanococci</taxon>
        <taxon>Methanococcales</taxon>
        <taxon>Methanococcaceae</taxon>
        <taxon>Methanococcus</taxon>
    </lineage>
</organism>
<sequence>MRIGVVGDSDVAVGFRLAGLTDVYEVKSPEQASKAIEELDNNAEIGLIITTERIGEGIRETIANAKKVIVEVPDKNGPIVREKDPVKILVRNAVGIDIK</sequence>
<accession>A6UP53</accession>
<proteinExistence type="inferred from homology"/>
<comment type="function">
    <text evidence="1">Component of the A-type ATP synthase that produces ATP from ADP in the presence of a proton gradient across the membrane.</text>
</comment>
<comment type="subunit">
    <text evidence="1">Has multiple subunits with at least A(3), B(3), C, D, E, F, H, I and proteolipid K(x).</text>
</comment>
<comment type="subcellular location">
    <subcellularLocation>
        <location evidence="1">Cell membrane</location>
        <topology evidence="1">Peripheral membrane protein</topology>
    </subcellularLocation>
</comment>
<comment type="similarity">
    <text evidence="1">Belongs to the V-ATPase F subunit family.</text>
</comment>
<feature type="chain" id="PRO_1000059437" description="A-type ATP synthase subunit F">
    <location>
        <begin position="1"/>
        <end position="99"/>
    </location>
</feature>